<dbReference type="EMBL" id="M18965">
    <property type="protein sequence ID" value="AAA27167.1"/>
    <property type="status" value="ALT_FRAME"/>
    <property type="molecule type" value="Genomic_DNA"/>
</dbReference>
<dbReference type="EMBL" id="U16303">
    <property type="protein sequence ID" value="AAA80578.1"/>
    <property type="status" value="ALT_FRAME"/>
    <property type="molecule type" value="Genomic_DNA"/>
</dbReference>
<dbReference type="EMBL" id="AE006468">
    <property type="protein sequence ID" value="AAL21789.1"/>
    <property type="molecule type" value="Genomic_DNA"/>
</dbReference>
<dbReference type="PIR" id="A28668">
    <property type="entry name" value="A28668"/>
</dbReference>
<dbReference type="RefSeq" id="NP_461830.1">
    <property type="nucleotide sequence ID" value="NC_003197.2"/>
</dbReference>
<dbReference type="RefSeq" id="WP_001005807.1">
    <property type="nucleotide sequence ID" value="NC_003197.2"/>
</dbReference>
<dbReference type="SMR" id="P0A1Y0"/>
<dbReference type="STRING" id="99287.STM2909"/>
<dbReference type="PaxDb" id="99287-STM2909"/>
<dbReference type="GeneID" id="1254432"/>
<dbReference type="KEGG" id="stm:STM2909"/>
<dbReference type="PATRIC" id="fig|99287.12.peg.3063"/>
<dbReference type="HOGENOM" id="CLU_002472_4_0_6"/>
<dbReference type="OMA" id="TPMMAQY"/>
<dbReference type="PhylomeDB" id="P0A1Y0"/>
<dbReference type="BioCyc" id="SENT99287:STM2909-MONOMER"/>
<dbReference type="Proteomes" id="UP000001014">
    <property type="component" value="Chromosome"/>
</dbReference>
<dbReference type="GO" id="GO:0005829">
    <property type="term" value="C:cytosol"/>
    <property type="evidence" value="ECO:0000318"/>
    <property type="project" value="GO_Central"/>
</dbReference>
<dbReference type="GO" id="GO:0005524">
    <property type="term" value="F:ATP binding"/>
    <property type="evidence" value="ECO:0007669"/>
    <property type="project" value="UniProtKB-UniRule"/>
</dbReference>
<dbReference type="GO" id="GO:0140664">
    <property type="term" value="F:ATP-dependent DNA damage sensor activity"/>
    <property type="evidence" value="ECO:0007669"/>
    <property type="project" value="InterPro"/>
</dbReference>
<dbReference type="GO" id="GO:0003684">
    <property type="term" value="F:damaged DNA binding"/>
    <property type="evidence" value="ECO:0007669"/>
    <property type="project" value="UniProtKB-UniRule"/>
</dbReference>
<dbReference type="GO" id="GO:0030983">
    <property type="term" value="F:mismatched DNA binding"/>
    <property type="evidence" value="ECO:0000318"/>
    <property type="project" value="GO_Central"/>
</dbReference>
<dbReference type="GO" id="GO:0006298">
    <property type="term" value="P:mismatch repair"/>
    <property type="evidence" value="ECO:0000318"/>
    <property type="project" value="GO_Central"/>
</dbReference>
<dbReference type="CDD" id="cd03284">
    <property type="entry name" value="ABC_MutS1"/>
    <property type="match status" value="1"/>
</dbReference>
<dbReference type="FunFam" id="1.10.1420.10:FF:000002">
    <property type="entry name" value="DNA mismatch repair protein MutS"/>
    <property type="match status" value="1"/>
</dbReference>
<dbReference type="FunFam" id="3.30.420.110:FF:000001">
    <property type="entry name" value="DNA mismatch repair protein MutS"/>
    <property type="match status" value="1"/>
</dbReference>
<dbReference type="FunFam" id="3.40.1170.10:FF:000001">
    <property type="entry name" value="DNA mismatch repair protein MutS"/>
    <property type="match status" value="1"/>
</dbReference>
<dbReference type="FunFam" id="3.40.50.300:FF:000283">
    <property type="entry name" value="DNA mismatch repair protein MutS"/>
    <property type="match status" value="1"/>
</dbReference>
<dbReference type="Gene3D" id="1.10.1420.10">
    <property type="match status" value="2"/>
</dbReference>
<dbReference type="Gene3D" id="6.10.140.430">
    <property type="match status" value="1"/>
</dbReference>
<dbReference type="Gene3D" id="3.40.1170.10">
    <property type="entry name" value="DNA repair protein MutS, domain I"/>
    <property type="match status" value="1"/>
</dbReference>
<dbReference type="Gene3D" id="3.30.420.110">
    <property type="entry name" value="MutS, connector domain"/>
    <property type="match status" value="1"/>
</dbReference>
<dbReference type="Gene3D" id="3.40.50.300">
    <property type="entry name" value="P-loop containing nucleotide triphosphate hydrolases"/>
    <property type="match status" value="1"/>
</dbReference>
<dbReference type="HAMAP" id="MF_00096">
    <property type="entry name" value="MutS"/>
    <property type="match status" value="1"/>
</dbReference>
<dbReference type="InterPro" id="IPR005748">
    <property type="entry name" value="DNA_mismatch_repair_MutS"/>
</dbReference>
<dbReference type="InterPro" id="IPR007695">
    <property type="entry name" value="DNA_mismatch_repair_MutS-lik_N"/>
</dbReference>
<dbReference type="InterPro" id="IPR017261">
    <property type="entry name" value="DNA_mismatch_repair_MutS/MSH"/>
</dbReference>
<dbReference type="InterPro" id="IPR000432">
    <property type="entry name" value="DNA_mismatch_repair_MutS_C"/>
</dbReference>
<dbReference type="InterPro" id="IPR007861">
    <property type="entry name" value="DNA_mismatch_repair_MutS_clamp"/>
</dbReference>
<dbReference type="InterPro" id="IPR007696">
    <property type="entry name" value="DNA_mismatch_repair_MutS_core"/>
</dbReference>
<dbReference type="InterPro" id="IPR016151">
    <property type="entry name" value="DNA_mismatch_repair_MutS_N"/>
</dbReference>
<dbReference type="InterPro" id="IPR036187">
    <property type="entry name" value="DNA_mismatch_repair_MutS_sf"/>
</dbReference>
<dbReference type="InterPro" id="IPR007860">
    <property type="entry name" value="DNA_mmatch_repair_MutS_con_dom"/>
</dbReference>
<dbReference type="InterPro" id="IPR045076">
    <property type="entry name" value="MutS"/>
</dbReference>
<dbReference type="InterPro" id="IPR036678">
    <property type="entry name" value="MutS_con_dom_sf"/>
</dbReference>
<dbReference type="InterPro" id="IPR027417">
    <property type="entry name" value="P-loop_NTPase"/>
</dbReference>
<dbReference type="NCBIfam" id="TIGR01070">
    <property type="entry name" value="mutS1"/>
    <property type="match status" value="1"/>
</dbReference>
<dbReference type="NCBIfam" id="NF003810">
    <property type="entry name" value="PRK05399.1"/>
    <property type="match status" value="1"/>
</dbReference>
<dbReference type="PANTHER" id="PTHR11361:SF34">
    <property type="entry name" value="DNA MISMATCH REPAIR PROTEIN MSH1, MITOCHONDRIAL"/>
    <property type="match status" value="1"/>
</dbReference>
<dbReference type="PANTHER" id="PTHR11361">
    <property type="entry name" value="DNA MISMATCH REPAIR PROTEIN MUTS FAMILY MEMBER"/>
    <property type="match status" value="1"/>
</dbReference>
<dbReference type="Pfam" id="PF01624">
    <property type="entry name" value="MutS_I"/>
    <property type="match status" value="1"/>
</dbReference>
<dbReference type="Pfam" id="PF05188">
    <property type="entry name" value="MutS_II"/>
    <property type="match status" value="1"/>
</dbReference>
<dbReference type="Pfam" id="PF05192">
    <property type="entry name" value="MutS_III"/>
    <property type="match status" value="1"/>
</dbReference>
<dbReference type="Pfam" id="PF05190">
    <property type="entry name" value="MutS_IV"/>
    <property type="match status" value="1"/>
</dbReference>
<dbReference type="Pfam" id="PF00488">
    <property type="entry name" value="MutS_V"/>
    <property type="match status" value="1"/>
</dbReference>
<dbReference type="PIRSF" id="PIRSF037677">
    <property type="entry name" value="DNA_mis_repair_Msh6"/>
    <property type="match status" value="1"/>
</dbReference>
<dbReference type="SMART" id="SM00534">
    <property type="entry name" value="MUTSac"/>
    <property type="match status" value="1"/>
</dbReference>
<dbReference type="SMART" id="SM00533">
    <property type="entry name" value="MUTSd"/>
    <property type="match status" value="1"/>
</dbReference>
<dbReference type="SUPFAM" id="SSF55271">
    <property type="entry name" value="DNA repair protein MutS, domain I"/>
    <property type="match status" value="1"/>
</dbReference>
<dbReference type="SUPFAM" id="SSF53150">
    <property type="entry name" value="DNA repair protein MutS, domain II"/>
    <property type="match status" value="1"/>
</dbReference>
<dbReference type="SUPFAM" id="SSF48334">
    <property type="entry name" value="DNA repair protein MutS, domain III"/>
    <property type="match status" value="1"/>
</dbReference>
<dbReference type="SUPFAM" id="SSF52540">
    <property type="entry name" value="P-loop containing nucleoside triphosphate hydrolases"/>
    <property type="match status" value="1"/>
</dbReference>
<dbReference type="PROSITE" id="PS00486">
    <property type="entry name" value="DNA_MISMATCH_REPAIR_2"/>
    <property type="match status" value="1"/>
</dbReference>
<comment type="function">
    <text>This protein is involved in the repair of mismatches in DNA. It is possible that it carries out the mismatch recognition step. This protein has a weak ATPase activity.</text>
</comment>
<comment type="similarity">
    <text evidence="3">Belongs to the DNA mismatch repair MutS family.</text>
</comment>
<comment type="sequence caution" evidence="3">
    <conflict type="frameshift">
        <sequence resource="EMBL-CDS" id="AAA27167"/>
    </conflict>
</comment>
<comment type="sequence caution" evidence="3">
    <conflict type="frameshift">
        <sequence resource="EMBL-CDS" id="AAA80578"/>
    </conflict>
</comment>
<accession>P0A1Y0</accession>
<accession>P10339</accession>
<evidence type="ECO:0000255" key="1"/>
<evidence type="ECO:0000269" key="2">
    <source>
    </source>
</evidence>
<evidence type="ECO:0000305" key="3"/>
<gene>
    <name type="primary">mutS</name>
    <name type="ordered locus">STM2909</name>
</gene>
<feature type="chain" id="PRO_0000115132" description="DNA mismatch repair protein MutS">
    <location>
        <begin position="1"/>
        <end position="855"/>
    </location>
</feature>
<feature type="binding site" evidence="1">
    <location>
        <begin position="616"/>
        <end position="623"/>
    </location>
    <ligand>
        <name>ATP</name>
        <dbReference type="ChEBI" id="CHEBI:30616"/>
    </ligand>
</feature>
<feature type="mutagenesis site" description="Defective in mismatch repair; ATPase activity reduced 6-fold." evidence="2">
    <original>K</original>
    <variation>A</variation>
    <location>
        <position position="622"/>
    </location>
</feature>
<feature type="sequence conflict" description="In Ref. 1 and 2." evidence="3" ref="1 2">
    <original>TA</original>
    <variation>S</variation>
    <location>
        <begin position="361"/>
        <end position="362"/>
    </location>
</feature>
<keyword id="KW-0067">ATP-binding</keyword>
<keyword id="KW-0903">Direct protein sequencing</keyword>
<keyword id="KW-0227">DNA damage</keyword>
<keyword id="KW-0234">DNA repair</keyword>
<keyword id="KW-0238">DNA-binding</keyword>
<keyword id="KW-0547">Nucleotide-binding</keyword>
<keyword id="KW-1185">Reference proteome</keyword>
<protein>
    <recommendedName>
        <fullName>DNA mismatch repair protein MutS</fullName>
    </recommendedName>
</protein>
<sequence>MNESFDKDFSNHTPMMQQYLKLKAQHPEILLFYRMGDFYELFYDDAKRASQLLDISLTKRGASAGEPIPMAGIPHHAVENYLAKLVNQGESVAICEQIGDPATSKGPVERKVVRIVTPGTISDEALLQERQDNLLAAIWQDGKGYGYATLDISSGRFRLSEPADRETMAAELQRTNPAELLYAEDFAEMALIEGRRGLRRRPLWEFEIDTARQQLNLQFGTRDLVGFGVENASRGLCAAGCLLQYVKDTQRTSLPHIRSITMERQQDSIIMDAATRRNLEITQNLAGGVENTLAAVLDCTVTPMGSRMLKRWLHMPVRNTDILRERQQTIGALQDTVSELQPVLRQVGDLERILARLALRTARPRDLARMRHAFQQLPELHAQLETVDSAPVQALRKKMGDFAELRDLLERAIIDAPPVLVRDGGVIAPGYHEELDEWRALADGATDYLDRLEIRERERTGLDTLKVGYNAVHGYYIQISRGQSHLAPINYVRRQTLKNAERYIIPELKEYEDKVLTSKGKALALEKQLYDELFDLLLPHLADLQQSANALAELDVLVNLAERAWTLNYTCPTFTDKPGIRITEGRHPVVEQVLNEPFIANPLNLSPQRRMLIITGPNMGGKSTYMRQTALIALLAYIGSYVPAQNVEIGPIDRIFTRVGAADDLASGRSTFMVEMTETANILHNATENSLVLMDEIGRGTSTYDGLSLAWACAENLANKIKALTLFATHYFELTQLPEKMEGVANVHLDALEHGDTIAFMHSVQDGAASKSYGLAVAALAGVPKEVIKRARQKLRELESISPNAAATQVDGTQMSLLAAPEETSPAVEALENLDPDSLTPRQALEWIYRLKSLV</sequence>
<reference key="1">
    <citation type="journal article" date="1988" name="J. Bacteriol.">
        <title>Nucleotide sequence of the Salmonella typhimurium mutS gene required for mismatch repair: homology of MutS and HexA of Streptococcus pneumoniae.</title>
        <authorList>
            <person name="Haber L.T."/>
            <person name="Pang P.P."/>
            <person name="Sobell D.I."/>
            <person name="Mankovich J.A."/>
            <person name="Walker G.C."/>
        </authorList>
    </citation>
    <scope>NUCLEOTIDE SEQUENCE [GENOMIC DNA]</scope>
    <scope>PROTEIN SEQUENCE OF 1-5</scope>
</reference>
<reference key="2">
    <citation type="journal article" date="1995" name="Mol. Microbiol.">
        <title>A 40 kb chromosomal fragment encoding Salmonella typhimurium invasion genes is absent from the corresponding region of the Escherichia coli K-12 chromosome.</title>
        <authorList>
            <person name="Mills D.M."/>
            <person name="Bajaj V."/>
            <person name="Lee C.A."/>
        </authorList>
    </citation>
    <scope>NUCLEOTIDE SEQUENCE [GENOMIC DNA]</scope>
</reference>
<reference key="3">
    <citation type="journal article" date="2001" name="Nature">
        <title>Complete genome sequence of Salmonella enterica serovar Typhimurium LT2.</title>
        <authorList>
            <person name="McClelland M."/>
            <person name="Sanderson K.E."/>
            <person name="Spieth J."/>
            <person name="Clifton S.W."/>
            <person name="Latreille P."/>
            <person name="Courtney L."/>
            <person name="Porwollik S."/>
            <person name="Ali J."/>
            <person name="Dante M."/>
            <person name="Du F."/>
            <person name="Hou S."/>
            <person name="Layman D."/>
            <person name="Leonard S."/>
            <person name="Nguyen C."/>
            <person name="Scott K."/>
            <person name="Holmes A."/>
            <person name="Grewal N."/>
            <person name="Mulvaney E."/>
            <person name="Ryan E."/>
            <person name="Sun H."/>
            <person name="Florea L."/>
            <person name="Miller W."/>
            <person name="Stoneking T."/>
            <person name="Nhan M."/>
            <person name="Waterston R."/>
            <person name="Wilson R.K."/>
        </authorList>
    </citation>
    <scope>NUCLEOTIDE SEQUENCE [LARGE SCALE GENOMIC DNA]</scope>
    <source>
        <strain>LT2 / SGSC1412 / ATCC 700720</strain>
    </source>
</reference>
<reference key="4">
    <citation type="journal article" date="1991" name="EMBO J.">
        <title>Altering the conserved nucleotide binding motif in the Salmonella typhimurium MutS mismatch repair protein affects both its ATPase and mismatch binding activities.</title>
        <authorList>
            <person name="Haber L.T."/>
            <person name="Walker G.C."/>
        </authorList>
    </citation>
    <scope>MUTAGENESIS</scope>
    <scope>ATP-BINDING</scope>
</reference>
<reference key="5">
    <citation type="journal article" date="1993" name="J. Mol. Biol.">
        <title>Detecting frame shifts by amino acid sequence comparison.</title>
        <authorList>
            <person name="Claverie J.-M."/>
        </authorList>
    </citation>
    <scope>IDENTIFICATION OF PROBABLE FRAMESHIFT IN 394-425</scope>
</reference>
<name>MUTS_SALTY</name>
<organism>
    <name type="scientific">Salmonella typhimurium (strain LT2 / SGSC1412 / ATCC 700720)</name>
    <dbReference type="NCBI Taxonomy" id="99287"/>
    <lineage>
        <taxon>Bacteria</taxon>
        <taxon>Pseudomonadati</taxon>
        <taxon>Pseudomonadota</taxon>
        <taxon>Gammaproteobacteria</taxon>
        <taxon>Enterobacterales</taxon>
        <taxon>Enterobacteriaceae</taxon>
        <taxon>Salmonella</taxon>
    </lineage>
</organism>
<proteinExistence type="evidence at protein level"/>